<proteinExistence type="evidence at protein level"/>
<evidence type="ECO:0000250" key="1">
    <source>
        <dbReference type="UniProtKB" id="Q1MTN3"/>
    </source>
</evidence>
<evidence type="ECO:0000256" key="2">
    <source>
        <dbReference type="SAM" id="MobiDB-lite"/>
    </source>
</evidence>
<evidence type="ECO:0000269" key="3">
    <source>
    </source>
</evidence>
<evidence type="ECO:0000269" key="4">
    <source>
    </source>
</evidence>
<evidence type="ECO:0000269" key="5">
    <source>
    </source>
</evidence>
<evidence type="ECO:0000269" key="6">
    <source>
    </source>
</evidence>
<evidence type="ECO:0000305" key="7"/>
<evidence type="ECO:0007744" key="8">
    <source>
    </source>
</evidence>
<evidence type="ECO:0007744" key="9">
    <source>
    </source>
</evidence>
<evidence type="ECO:0007744" key="10">
    <source>
    </source>
</evidence>
<name>INCE_YEAST</name>
<reference key="1">
    <citation type="journal article" date="1993" name="Yeast">
        <title>Sequence of a 4.8 kb fragment of Saccharomyces cerevisiae chromosome II including three essential open reading frames.</title>
        <authorList>
            <person name="Baur A."/>
            <person name="Schaaff-Gerstenschlaeger I."/>
            <person name="Boles E."/>
            <person name="Miosga T."/>
            <person name="Rose M."/>
            <person name="Zimmermann F.K."/>
        </authorList>
    </citation>
    <scope>NUCLEOTIDE SEQUENCE [GENOMIC DNA]</scope>
    <source>
        <strain>ATCC 204508 / S288c</strain>
    </source>
</reference>
<reference key="2">
    <citation type="journal article" date="1995" name="Yeast">
        <title>Sequence and functional analysis of a 7.2 kb DNA fragment containing four open reading frames located between RPB5 and CDC28 on the right arm of chromosome II.</title>
        <authorList>
            <person name="Rose M."/>
            <person name="Kiesau P."/>
            <person name="Proft M."/>
            <person name="Entian K.-D."/>
        </authorList>
    </citation>
    <scope>NUCLEOTIDE SEQUENCE [GENOMIC DNA]</scope>
</reference>
<reference key="3">
    <citation type="journal article" date="1994" name="EMBO J.">
        <title>Complete DNA sequence of yeast chromosome II.</title>
        <authorList>
            <person name="Feldmann H."/>
            <person name="Aigle M."/>
            <person name="Aljinovic G."/>
            <person name="Andre B."/>
            <person name="Baclet M.C."/>
            <person name="Barthe C."/>
            <person name="Baur A."/>
            <person name="Becam A.-M."/>
            <person name="Biteau N."/>
            <person name="Boles E."/>
            <person name="Brandt T."/>
            <person name="Brendel M."/>
            <person name="Brueckner M."/>
            <person name="Bussereau F."/>
            <person name="Christiansen C."/>
            <person name="Contreras R."/>
            <person name="Crouzet M."/>
            <person name="Cziepluch C."/>
            <person name="Demolis N."/>
            <person name="Delaveau T."/>
            <person name="Doignon F."/>
            <person name="Domdey H."/>
            <person name="Duesterhus S."/>
            <person name="Dubois E."/>
            <person name="Dujon B."/>
            <person name="El Bakkoury M."/>
            <person name="Entian K.-D."/>
            <person name="Feuermann M."/>
            <person name="Fiers W."/>
            <person name="Fobo G.M."/>
            <person name="Fritz C."/>
            <person name="Gassenhuber J."/>
            <person name="Glansdorff N."/>
            <person name="Goffeau A."/>
            <person name="Grivell L.A."/>
            <person name="de Haan M."/>
            <person name="Hein C."/>
            <person name="Herbert C.J."/>
            <person name="Hollenberg C.P."/>
            <person name="Holmstroem K."/>
            <person name="Jacq C."/>
            <person name="Jacquet M."/>
            <person name="Jauniaux J.-C."/>
            <person name="Jonniaux J.-L."/>
            <person name="Kallesoee T."/>
            <person name="Kiesau P."/>
            <person name="Kirchrath L."/>
            <person name="Koetter P."/>
            <person name="Korol S."/>
            <person name="Liebl S."/>
            <person name="Logghe M."/>
            <person name="Lohan A.J.E."/>
            <person name="Louis E.J."/>
            <person name="Li Z.Y."/>
            <person name="Maat M.J."/>
            <person name="Mallet L."/>
            <person name="Mannhaupt G."/>
            <person name="Messenguy F."/>
            <person name="Miosga T."/>
            <person name="Molemans F."/>
            <person name="Mueller S."/>
            <person name="Nasr F."/>
            <person name="Obermaier B."/>
            <person name="Perea J."/>
            <person name="Pierard A."/>
            <person name="Piravandi E."/>
            <person name="Pohl F.M."/>
            <person name="Pohl T.M."/>
            <person name="Potier S."/>
            <person name="Proft M."/>
            <person name="Purnelle B."/>
            <person name="Ramezani Rad M."/>
            <person name="Rieger M."/>
            <person name="Rose M."/>
            <person name="Schaaff-Gerstenschlaeger I."/>
            <person name="Scherens B."/>
            <person name="Schwarzlose C."/>
            <person name="Skala J."/>
            <person name="Slonimski P.P."/>
            <person name="Smits P.H.M."/>
            <person name="Souciet J.-L."/>
            <person name="Steensma H.Y."/>
            <person name="Stucka R."/>
            <person name="Urrestarazu L.A."/>
            <person name="van der Aart Q.J.M."/>
            <person name="Van Dyck L."/>
            <person name="Vassarotti A."/>
            <person name="Vetter I."/>
            <person name="Vierendeels F."/>
            <person name="Vissers S."/>
            <person name="Wagner G."/>
            <person name="de Wergifosse P."/>
            <person name="Wolfe K.H."/>
            <person name="Zagulski M."/>
            <person name="Zimmermann F.K."/>
            <person name="Mewes H.-W."/>
            <person name="Kleine K."/>
        </authorList>
    </citation>
    <scope>NUCLEOTIDE SEQUENCE [LARGE SCALE GENOMIC DNA]</scope>
    <source>
        <strain>ATCC 204508 / S288c</strain>
    </source>
</reference>
<reference key="4">
    <citation type="journal article" date="2014" name="G3 (Bethesda)">
        <title>The reference genome sequence of Saccharomyces cerevisiae: Then and now.</title>
        <authorList>
            <person name="Engel S.R."/>
            <person name="Dietrich F.S."/>
            <person name="Fisk D.G."/>
            <person name="Binkley G."/>
            <person name="Balakrishnan R."/>
            <person name="Costanzo M.C."/>
            <person name="Dwight S.S."/>
            <person name="Hitz B.C."/>
            <person name="Karra K."/>
            <person name="Nash R.S."/>
            <person name="Weng S."/>
            <person name="Wong E.D."/>
            <person name="Lloyd P."/>
            <person name="Skrzypek M.S."/>
            <person name="Miyasato S.R."/>
            <person name="Simison M."/>
            <person name="Cherry J.M."/>
        </authorList>
    </citation>
    <scope>GENOME REANNOTATION</scope>
    <source>
        <strain>ATCC 204508 / S288c</strain>
    </source>
</reference>
<reference key="5">
    <citation type="journal article" date="1999" name="J. Cell Biol.">
        <title>Sli15 associates with the ipl1 protein kinase to promote proper chromosome segregation in Saccharomyces cerevisiae.</title>
        <authorList>
            <person name="Kim J.-H."/>
            <person name="Kang J.-S."/>
            <person name="Chan C.S.M."/>
        </authorList>
    </citation>
    <scope>FUNCTION</scope>
    <scope>SUBCELLULAR LOCATION</scope>
</reference>
<reference key="6">
    <citation type="journal article" date="2001" name="J. Cell Biol.">
        <title>Functional cooperation of Dam1, Ipl1, and the inner centromere protein (INCENP)-related protein Sli15 during chromosome segregation.</title>
        <authorList>
            <person name="Kang J.-S."/>
            <person name="Cheeseman I.M."/>
            <person name="Kallstrom G."/>
            <person name="Velmurugan S."/>
            <person name="Barnes G."/>
            <person name="Chan C.S.M."/>
        </authorList>
    </citation>
    <scope>FUNCTION</scope>
    <scope>SUBCELLULAR LOCATION</scope>
    <scope>PHOSPHORYLATION</scope>
</reference>
<reference key="7">
    <citation type="journal article" date="2002" name="Cell">
        <title>Evidence that the Ipl1-Sli15 (Aurora kinase-INCENP) complex promotes chromosome bi-orientation by altering kinetochore-spindle pole connections.</title>
        <authorList>
            <person name="Tanaka T.U."/>
            <person name="Rachidi N."/>
            <person name="Janke C."/>
            <person name="Pereira G."/>
            <person name="Galova M."/>
            <person name="Schiebel E."/>
            <person name="Stark M.J.R."/>
            <person name="Nasmyth K."/>
        </authorList>
    </citation>
    <scope>FUNCTION</scope>
</reference>
<reference key="8">
    <citation type="journal article" date="2003" name="Nature">
        <title>Global analysis of protein expression in yeast.</title>
        <authorList>
            <person name="Ghaemmaghami S."/>
            <person name="Huh W.-K."/>
            <person name="Bower K."/>
            <person name="Howson R.W."/>
            <person name="Belle A."/>
            <person name="Dephoure N."/>
            <person name="O'Shea E.K."/>
            <person name="Weissman J.S."/>
        </authorList>
    </citation>
    <scope>LEVEL OF PROTEIN EXPRESSION [LARGE SCALE ANALYSIS]</scope>
</reference>
<reference key="9">
    <citation type="journal article" date="2007" name="Proc. Natl. Acad. Sci. U.S.A.">
        <title>Analysis of phosphorylation sites on proteins from Saccharomyces cerevisiae by electron transfer dissociation (ETD) mass spectrometry.</title>
        <authorList>
            <person name="Chi A."/>
            <person name="Huttenhower C."/>
            <person name="Geer L.Y."/>
            <person name="Coon J.J."/>
            <person name="Syka J.E.P."/>
            <person name="Bai D.L."/>
            <person name="Shabanowitz J."/>
            <person name="Burke D.J."/>
            <person name="Troyanskaya O.G."/>
            <person name="Hunt D.F."/>
        </authorList>
    </citation>
    <scope>PHOSPHORYLATION [LARGE SCALE ANALYSIS] AT SER-268</scope>
    <scope>IDENTIFICATION BY MASS SPECTROMETRY [LARGE SCALE ANALYSIS]</scope>
</reference>
<reference key="10">
    <citation type="journal article" date="2008" name="Mol. Cell. Proteomics">
        <title>A multidimensional chromatography technology for in-depth phosphoproteome analysis.</title>
        <authorList>
            <person name="Albuquerque C.P."/>
            <person name="Smolka M.B."/>
            <person name="Payne S.H."/>
            <person name="Bafna V."/>
            <person name="Eng J."/>
            <person name="Zhou H."/>
        </authorList>
    </citation>
    <scope>PHOSPHORYLATION [LARGE SCALE ANALYSIS] AT SER-489</scope>
    <scope>IDENTIFICATION BY MASS SPECTROMETRY [LARGE SCALE ANALYSIS]</scope>
</reference>
<reference key="11">
    <citation type="journal article" date="2009" name="Science">
        <title>Global analysis of Cdk1 substrate phosphorylation sites provides insights into evolution.</title>
        <authorList>
            <person name="Holt L.J."/>
            <person name="Tuch B.B."/>
            <person name="Villen J."/>
            <person name="Johnson A.D."/>
            <person name="Gygi S.P."/>
            <person name="Morgan D.O."/>
        </authorList>
    </citation>
    <scope>PHOSPHORYLATION [LARGE SCALE ANALYSIS] AT SER-489</scope>
    <scope>IDENTIFICATION BY MASS SPECTROMETRY [LARGE SCALE ANALYSIS]</scope>
</reference>
<accession>P38283</accession>
<accession>D6VQF1</accession>
<gene>
    <name type="primary">SLI15</name>
    <name type="ordered locus">YBR156C</name>
    <name type="ORF">YBR1206</name>
</gene>
<feature type="chain" id="PRO_0000071956" description="Inner centromere protein SLI15">
    <location>
        <begin position="1"/>
        <end position="698"/>
    </location>
</feature>
<feature type="region of interest" description="Disordered" evidence="2">
    <location>
        <begin position="365"/>
        <end position="390"/>
    </location>
</feature>
<feature type="region of interest" description="Disordered" evidence="2">
    <location>
        <begin position="405"/>
        <end position="444"/>
    </location>
</feature>
<feature type="region of interest" description="Disordered" evidence="2">
    <location>
        <begin position="455"/>
        <end position="474"/>
    </location>
</feature>
<feature type="region of interest" description="Disordered" evidence="2">
    <location>
        <begin position="535"/>
        <end position="560"/>
    </location>
</feature>
<feature type="compositionally biased region" description="Polar residues" evidence="2">
    <location>
        <begin position="422"/>
        <end position="439"/>
    </location>
</feature>
<feature type="compositionally biased region" description="Polar residues" evidence="2">
    <location>
        <begin position="459"/>
        <end position="474"/>
    </location>
</feature>
<feature type="compositionally biased region" description="Basic and acidic residues" evidence="2">
    <location>
        <begin position="550"/>
        <end position="560"/>
    </location>
</feature>
<feature type="modified residue" description="Phosphoserine" evidence="8">
    <location>
        <position position="268"/>
    </location>
</feature>
<feature type="modified residue" description="Phosphoserine" evidence="9 10">
    <location>
        <position position="489"/>
    </location>
</feature>
<protein>
    <recommendedName>
        <fullName>Inner centromere protein SLI15</fullName>
        <shortName>INCENP-related protein SLI15</shortName>
    </recommendedName>
</protein>
<keyword id="KW-0137">Centromere</keyword>
<keyword id="KW-0158">Chromosome</keyword>
<keyword id="KW-0159">Chromosome partition</keyword>
<keyword id="KW-0963">Cytoplasm</keyword>
<keyword id="KW-0206">Cytoskeleton</keyword>
<keyword id="KW-0995">Kinetochore</keyword>
<keyword id="KW-0539">Nucleus</keyword>
<keyword id="KW-0597">Phosphoprotein</keyword>
<keyword id="KW-1185">Reference proteome</keyword>
<sequence length="698" mass="79186">MDWAIKAARKKTQRKPGSTRSIIETLDDLNNLTTDAHSEINQRLYESSEWLRNNVYMNTLKYEDKKMEESLISPENTHNKMDVEFPKMKGEYELSNSQNDAAKDVTKTPRNGLHNDKSITPKSLRRKEVTEGMNRFSIHDTNKSPVEPLNSVKVDANESEKSSPWSPYKVEKVLRESSKTSESPINTKRFDNQTWAAKEEMENEPILQALKKAESVKVKPPPNSGIARSQRRSNMFVPLPNKDPLIIQHIPPTKSSGSIPKVRTVKESPIAFKKKSTINSPAIRAVENSDTAGSTKASSVFDRLSSIPTKSFENKISRGNVGHKYSSSSIDLTGSPMKKVSQKFKSINSTDTDMQEALRDIFSVKNKITKNNSPKGKNSRKSSIPRFDKTSLKLTTHKKLAIIAEQKKKSKHSSDVHKTGSRPHSISPTKISVDSSSPSKEVKNYYQSPVRGYLRPTKASISPNKNKNLTTSQTPHRLKIKEKTLRKLSPNIADISKPESRKSKNYRLTNLQLLPPAEAERDDLKKKFDKRLSGIMRSQQEHHRRKQEKQKRMSHLEQDLKKQTSFSNDYKDIRLKESLAPFDNHVRDTINKNTAFSTDNILATINTVDHREIIGNVTPKIASVNDSLPEINTDSEDEASVTLAAWAKSPYLQEQLIRQQDINPQTIFGPIPPLHTDEIFPNPRLNRLKPRQIVPKRS</sequence>
<dbReference type="EMBL" id="X71329">
    <property type="status" value="NOT_ANNOTATED_CDS"/>
    <property type="molecule type" value="Genomic_DNA"/>
</dbReference>
<dbReference type="EMBL" id="S59774">
    <property type="protein sequence ID" value="AAC60557.1"/>
    <property type="molecule type" value="Genomic_DNA"/>
</dbReference>
<dbReference type="EMBL" id="Z36025">
    <property type="protein sequence ID" value="CAA85115.1"/>
    <property type="molecule type" value="Genomic_DNA"/>
</dbReference>
<dbReference type="EMBL" id="BK006936">
    <property type="protein sequence ID" value="DAA07271.1"/>
    <property type="molecule type" value="Genomic_DNA"/>
</dbReference>
<dbReference type="PIR" id="S46027">
    <property type="entry name" value="S46027"/>
</dbReference>
<dbReference type="RefSeq" id="NP_009714.3">
    <property type="nucleotide sequence ID" value="NM_001178504.3"/>
</dbReference>
<dbReference type="SMR" id="P38283"/>
<dbReference type="BioGRID" id="32855">
    <property type="interactions" value="352"/>
</dbReference>
<dbReference type="ComplexPortal" id="CPX-1900">
    <property type="entry name" value="Chromosomal passenger complex"/>
</dbReference>
<dbReference type="DIP" id="DIP-5807N"/>
<dbReference type="FunCoup" id="P38283">
    <property type="interactions" value="50"/>
</dbReference>
<dbReference type="IntAct" id="P38283">
    <property type="interactions" value="11"/>
</dbReference>
<dbReference type="MINT" id="P38283"/>
<dbReference type="STRING" id="4932.YBR156C"/>
<dbReference type="iPTMnet" id="P38283"/>
<dbReference type="PaxDb" id="4932-YBR156C"/>
<dbReference type="PeptideAtlas" id="P38283"/>
<dbReference type="EnsemblFungi" id="YBR156C_mRNA">
    <property type="protein sequence ID" value="YBR156C"/>
    <property type="gene ID" value="YBR156C"/>
</dbReference>
<dbReference type="GeneID" id="852453"/>
<dbReference type="KEGG" id="sce:YBR156C"/>
<dbReference type="AGR" id="SGD:S000000360"/>
<dbReference type="SGD" id="S000000360">
    <property type="gene designation" value="SLI15"/>
</dbReference>
<dbReference type="VEuPathDB" id="FungiDB:YBR156C"/>
<dbReference type="eggNOG" id="ENOG502S0AD">
    <property type="taxonomic scope" value="Eukaryota"/>
</dbReference>
<dbReference type="HOGENOM" id="CLU_015675_0_0_1"/>
<dbReference type="InParanoid" id="P38283"/>
<dbReference type="OMA" id="RSNMFVP"/>
<dbReference type="OrthoDB" id="6123at2759"/>
<dbReference type="BioCyc" id="YEAST:G3O-29106-MONOMER"/>
<dbReference type="BioGRID-ORCS" id="852453">
    <property type="hits" value="0 hits in 10 CRISPR screens"/>
</dbReference>
<dbReference type="PRO" id="PR:P38283"/>
<dbReference type="Proteomes" id="UP000002311">
    <property type="component" value="Chromosome II"/>
</dbReference>
<dbReference type="RNAct" id="P38283">
    <property type="molecule type" value="protein"/>
</dbReference>
<dbReference type="GO" id="GO:0032133">
    <property type="term" value="C:chromosome passenger complex"/>
    <property type="evidence" value="ECO:0000314"/>
    <property type="project" value="SGD"/>
</dbReference>
<dbReference type="GO" id="GO:0005737">
    <property type="term" value="C:cytoplasm"/>
    <property type="evidence" value="ECO:0007669"/>
    <property type="project" value="UniProtKB-KW"/>
</dbReference>
<dbReference type="GO" id="GO:0000776">
    <property type="term" value="C:kinetochore"/>
    <property type="evidence" value="ECO:0007669"/>
    <property type="project" value="UniProtKB-KW"/>
</dbReference>
<dbReference type="GO" id="GO:0005828">
    <property type="term" value="C:kinetochore microtubule"/>
    <property type="evidence" value="ECO:0000314"/>
    <property type="project" value="SGD"/>
</dbReference>
<dbReference type="GO" id="GO:0072686">
    <property type="term" value="C:mitotic spindle"/>
    <property type="evidence" value="ECO:0000314"/>
    <property type="project" value="CACAO"/>
</dbReference>
<dbReference type="GO" id="GO:0005634">
    <property type="term" value="C:nucleus"/>
    <property type="evidence" value="ECO:0007669"/>
    <property type="project" value="UniProtKB-SubCell"/>
</dbReference>
<dbReference type="GO" id="GO:0005876">
    <property type="term" value="C:spindle microtubule"/>
    <property type="evidence" value="ECO:0000314"/>
    <property type="project" value="SGD"/>
</dbReference>
<dbReference type="GO" id="GO:0051233">
    <property type="term" value="C:spindle midzone"/>
    <property type="evidence" value="ECO:0000314"/>
    <property type="project" value="SGD"/>
</dbReference>
<dbReference type="GO" id="GO:0030295">
    <property type="term" value="F:protein kinase activator activity"/>
    <property type="evidence" value="ECO:0000315"/>
    <property type="project" value="SGD"/>
</dbReference>
<dbReference type="GO" id="GO:0032147">
    <property type="term" value="P:activation of protein kinase activity"/>
    <property type="evidence" value="ECO:0000314"/>
    <property type="project" value="CACAO"/>
</dbReference>
<dbReference type="GO" id="GO:0051316">
    <property type="term" value="P:attachment of meiotic spindle microtubules to kinetochore"/>
    <property type="evidence" value="ECO:0000303"/>
    <property type="project" value="ComplexPortal"/>
</dbReference>
<dbReference type="GO" id="GO:0007059">
    <property type="term" value="P:chromosome segregation"/>
    <property type="evidence" value="ECO:0000315"/>
    <property type="project" value="SGD"/>
</dbReference>
<dbReference type="GO" id="GO:0090267">
    <property type="term" value="P:positive regulation of mitotic cell cycle spindle assembly checkpoint"/>
    <property type="evidence" value="ECO:0000303"/>
    <property type="project" value="ComplexPortal"/>
</dbReference>
<dbReference type="GO" id="GO:0032465">
    <property type="term" value="P:regulation of cytokinesis"/>
    <property type="evidence" value="ECO:0000315"/>
    <property type="project" value="SGD"/>
</dbReference>
<dbReference type="GO" id="GO:0032185">
    <property type="term" value="P:septin cytoskeleton organization"/>
    <property type="evidence" value="ECO:0000315"/>
    <property type="project" value="SGD"/>
</dbReference>
<dbReference type="GO" id="GO:0031134">
    <property type="term" value="P:sister chromatid biorientation"/>
    <property type="evidence" value="ECO:0000303"/>
    <property type="project" value="ComplexPortal"/>
</dbReference>
<dbReference type="InterPro" id="IPR005635">
    <property type="entry name" value="Inner_centromere_prot_ARK-bd"/>
</dbReference>
<dbReference type="Pfam" id="PF03941">
    <property type="entry name" value="INCENP_ARK-bind"/>
    <property type="match status" value="1"/>
</dbReference>
<comment type="function">
    <text evidence="1 3 4 5">Component of the chromosomal passenger complex (CPC), a complex that acts as a key regulator of mitosis (By similarity). Stimulates IPL1 kinase activity and facilitates its association with the mitotic spindle. Has a role in attaching the kinetochores to the microtubules and ensuring that sister kinetochores connect to opposite poles (PubMed:10385519, PubMed:11724818, PubMed:11853667).</text>
</comment>
<comment type="subunit">
    <text evidence="1">Component of the CPC complex at least composed of IPL1, BIR1 and SLI15.</text>
</comment>
<comment type="interaction">
    <interactant intactId="EBI-20842">
        <id>P38283</id>
    </interactant>
    <interactant intactId="EBI-3648">
        <id>P47134</id>
        <label>BIR1</label>
    </interactant>
    <organismsDiffer>false</organismsDiffer>
    <experiments>8</experiments>
</comment>
<comment type="interaction">
    <interactant intactId="EBI-20842">
        <id>P38283</id>
    </interactant>
    <interactant intactId="EBI-4192">
        <id>Q00684</id>
        <label>CDC14</label>
    </interactant>
    <organismsDiffer>false</organismsDiffer>
    <experiments>2</experiments>
</comment>
<comment type="interaction">
    <interactant intactId="EBI-20842">
        <id>P38283</id>
    </interactant>
    <interactant intactId="EBI-4515">
        <id>P24869</id>
        <label>CLB2</label>
    </interactant>
    <organismsDiffer>false</organismsDiffer>
    <experiments>2</experiments>
</comment>
<comment type="interaction">
    <interactant intactId="EBI-20842">
        <id>P38283</id>
    </interactant>
    <interactant intactId="EBI-23268">
        <id>P53267</id>
        <label>DAM1</label>
    </interactant>
    <organismsDiffer>false</organismsDiffer>
    <experiments>2</experiments>
</comment>
<comment type="interaction">
    <interactant intactId="EBI-20842">
        <id>P38283</id>
    </interactant>
    <interactant intactId="EBI-9319">
        <id>P38991</id>
        <label>IPL1</label>
    </interactant>
    <organismsDiffer>false</organismsDiffer>
    <experiments>10</experiments>
</comment>
<comment type="interaction">
    <interactant intactId="EBI-20842">
        <id>P38283</id>
    </interactant>
    <interactant intactId="EBI-9513736">
        <id>Q3E7Y6</id>
        <label>NBL1</label>
    </interactant>
    <organismsDiffer>false</organismsDiffer>
    <experiments>5</experiments>
</comment>
<comment type="subcellular location">
    <subcellularLocation>
        <location evidence="3">Nucleus</location>
    </subcellularLocation>
    <subcellularLocation>
        <location evidence="3 4">Cytoplasm</location>
        <location evidence="3 4">Cytoskeleton</location>
        <location evidence="3 4">Spindle</location>
    </subcellularLocation>
    <subcellularLocation>
        <location evidence="4">Chromosome</location>
        <location evidence="4">Centromere</location>
        <location evidence="4">Kinetochore</location>
    </subcellularLocation>
    <text evidence="4">Associates with the mitotic spindle and the kinetochore (PubMed:11724818).</text>
</comment>
<comment type="PTM">
    <text evidence="4">Phosphorylated by serine/threonine protein kinase IPL1.</text>
</comment>
<comment type="miscellaneous">
    <text evidence="6">Present with 319 molecules/cell in log phase SD medium.</text>
</comment>
<comment type="similarity">
    <text evidence="7">Belongs to the INCENP family.</text>
</comment>
<organism>
    <name type="scientific">Saccharomyces cerevisiae (strain ATCC 204508 / S288c)</name>
    <name type="common">Baker's yeast</name>
    <dbReference type="NCBI Taxonomy" id="559292"/>
    <lineage>
        <taxon>Eukaryota</taxon>
        <taxon>Fungi</taxon>
        <taxon>Dikarya</taxon>
        <taxon>Ascomycota</taxon>
        <taxon>Saccharomycotina</taxon>
        <taxon>Saccharomycetes</taxon>
        <taxon>Saccharomycetales</taxon>
        <taxon>Saccharomycetaceae</taxon>
        <taxon>Saccharomyces</taxon>
    </lineage>
</organism>